<keyword id="KW-0240">DNA-directed RNA polymerase</keyword>
<keyword id="KW-0460">Magnesium</keyword>
<keyword id="KW-0479">Metal-binding</keyword>
<keyword id="KW-0548">Nucleotidyltransferase</keyword>
<keyword id="KW-1185">Reference proteome</keyword>
<keyword id="KW-0804">Transcription</keyword>
<keyword id="KW-0808">Transferase</keyword>
<keyword id="KW-0862">Zinc</keyword>
<name>RPOC_SHEON</name>
<feature type="chain" id="PRO_0000067789" description="DNA-directed RNA polymerase subunit beta'">
    <location>
        <begin position="1"/>
        <end position="1405"/>
    </location>
</feature>
<feature type="binding site" evidence="1">
    <location>
        <position position="70"/>
    </location>
    <ligand>
        <name>Zn(2+)</name>
        <dbReference type="ChEBI" id="CHEBI:29105"/>
        <label>1</label>
    </ligand>
</feature>
<feature type="binding site" evidence="1">
    <location>
        <position position="72"/>
    </location>
    <ligand>
        <name>Zn(2+)</name>
        <dbReference type="ChEBI" id="CHEBI:29105"/>
        <label>1</label>
    </ligand>
</feature>
<feature type="binding site" evidence="1">
    <location>
        <position position="85"/>
    </location>
    <ligand>
        <name>Zn(2+)</name>
        <dbReference type="ChEBI" id="CHEBI:29105"/>
        <label>1</label>
    </ligand>
</feature>
<feature type="binding site" evidence="1">
    <location>
        <position position="88"/>
    </location>
    <ligand>
        <name>Zn(2+)</name>
        <dbReference type="ChEBI" id="CHEBI:29105"/>
        <label>1</label>
    </ligand>
</feature>
<feature type="binding site" evidence="1">
    <location>
        <position position="460"/>
    </location>
    <ligand>
        <name>Mg(2+)</name>
        <dbReference type="ChEBI" id="CHEBI:18420"/>
    </ligand>
</feature>
<feature type="binding site" evidence="1">
    <location>
        <position position="462"/>
    </location>
    <ligand>
        <name>Mg(2+)</name>
        <dbReference type="ChEBI" id="CHEBI:18420"/>
    </ligand>
</feature>
<feature type="binding site" evidence="1">
    <location>
        <position position="464"/>
    </location>
    <ligand>
        <name>Mg(2+)</name>
        <dbReference type="ChEBI" id="CHEBI:18420"/>
    </ligand>
</feature>
<feature type="binding site" evidence="1">
    <location>
        <position position="814"/>
    </location>
    <ligand>
        <name>Zn(2+)</name>
        <dbReference type="ChEBI" id="CHEBI:29105"/>
        <label>2</label>
    </ligand>
</feature>
<feature type="binding site" evidence="1">
    <location>
        <position position="888"/>
    </location>
    <ligand>
        <name>Zn(2+)</name>
        <dbReference type="ChEBI" id="CHEBI:29105"/>
        <label>2</label>
    </ligand>
</feature>
<feature type="binding site" evidence="1">
    <location>
        <position position="895"/>
    </location>
    <ligand>
        <name>Zn(2+)</name>
        <dbReference type="ChEBI" id="CHEBI:29105"/>
        <label>2</label>
    </ligand>
</feature>
<feature type="binding site" evidence="1">
    <location>
        <position position="898"/>
    </location>
    <ligand>
        <name>Zn(2+)</name>
        <dbReference type="ChEBI" id="CHEBI:29105"/>
        <label>2</label>
    </ligand>
</feature>
<protein>
    <recommendedName>
        <fullName evidence="1">DNA-directed RNA polymerase subunit beta'</fullName>
        <shortName evidence="1">RNAP subunit beta'</shortName>
        <ecNumber evidence="1">2.7.7.6</ecNumber>
    </recommendedName>
    <alternativeName>
        <fullName evidence="1">RNA polymerase subunit beta'</fullName>
    </alternativeName>
    <alternativeName>
        <fullName evidence="1">Transcriptase subunit beta'</fullName>
    </alternativeName>
</protein>
<organism>
    <name type="scientific">Shewanella oneidensis (strain ATCC 700550 / JCM 31522 / CIP 106686 / LMG 19005 / NCIMB 14063 / MR-1)</name>
    <dbReference type="NCBI Taxonomy" id="211586"/>
    <lineage>
        <taxon>Bacteria</taxon>
        <taxon>Pseudomonadati</taxon>
        <taxon>Pseudomonadota</taxon>
        <taxon>Gammaproteobacteria</taxon>
        <taxon>Alteromonadales</taxon>
        <taxon>Shewanellaceae</taxon>
        <taxon>Shewanella</taxon>
    </lineage>
</organism>
<accession>Q8EK73</accession>
<comment type="function">
    <text evidence="1">DNA-dependent RNA polymerase catalyzes the transcription of DNA into RNA using the four ribonucleoside triphosphates as substrates.</text>
</comment>
<comment type="catalytic activity">
    <reaction evidence="1">
        <text>RNA(n) + a ribonucleoside 5'-triphosphate = RNA(n+1) + diphosphate</text>
        <dbReference type="Rhea" id="RHEA:21248"/>
        <dbReference type="Rhea" id="RHEA-COMP:14527"/>
        <dbReference type="Rhea" id="RHEA-COMP:17342"/>
        <dbReference type="ChEBI" id="CHEBI:33019"/>
        <dbReference type="ChEBI" id="CHEBI:61557"/>
        <dbReference type="ChEBI" id="CHEBI:140395"/>
        <dbReference type="EC" id="2.7.7.6"/>
    </reaction>
</comment>
<comment type="cofactor">
    <cofactor evidence="1">
        <name>Mg(2+)</name>
        <dbReference type="ChEBI" id="CHEBI:18420"/>
    </cofactor>
    <text evidence="1">Binds 1 Mg(2+) ion per subunit.</text>
</comment>
<comment type="cofactor">
    <cofactor evidence="1">
        <name>Zn(2+)</name>
        <dbReference type="ChEBI" id="CHEBI:29105"/>
    </cofactor>
    <text evidence="1">Binds 2 Zn(2+) ions per subunit.</text>
</comment>
<comment type="subunit">
    <text evidence="1">The RNAP catalytic core consists of 2 alpha, 1 beta, 1 beta' and 1 omega subunit. When a sigma factor is associated with the core the holoenzyme is formed, which can initiate transcription.</text>
</comment>
<comment type="similarity">
    <text evidence="1">Belongs to the RNA polymerase beta' chain family.</text>
</comment>
<proteinExistence type="inferred from homology"/>
<evidence type="ECO:0000255" key="1">
    <source>
        <dbReference type="HAMAP-Rule" id="MF_01322"/>
    </source>
</evidence>
<dbReference type="EC" id="2.7.7.6" evidence="1"/>
<dbReference type="EMBL" id="AE014299">
    <property type="protein sequence ID" value="AAN53310.1"/>
    <property type="molecule type" value="Genomic_DNA"/>
</dbReference>
<dbReference type="RefSeq" id="NP_715865.1">
    <property type="nucleotide sequence ID" value="NC_004347.2"/>
</dbReference>
<dbReference type="RefSeq" id="WP_011070611.1">
    <property type="nucleotide sequence ID" value="NC_004347.2"/>
</dbReference>
<dbReference type="SMR" id="Q8EK73"/>
<dbReference type="STRING" id="211586.SO_0225"/>
<dbReference type="PaxDb" id="211586-SO_0225"/>
<dbReference type="KEGG" id="son:SO_0225"/>
<dbReference type="PATRIC" id="fig|211586.12.peg.213"/>
<dbReference type="eggNOG" id="COG0086">
    <property type="taxonomic scope" value="Bacteria"/>
</dbReference>
<dbReference type="HOGENOM" id="CLU_000524_3_1_6"/>
<dbReference type="OrthoDB" id="9815296at2"/>
<dbReference type="PhylomeDB" id="Q8EK73"/>
<dbReference type="BioCyc" id="SONE211586:G1GMP-214-MONOMER"/>
<dbReference type="Proteomes" id="UP000008186">
    <property type="component" value="Chromosome"/>
</dbReference>
<dbReference type="GO" id="GO:0000428">
    <property type="term" value="C:DNA-directed RNA polymerase complex"/>
    <property type="evidence" value="ECO:0007669"/>
    <property type="project" value="UniProtKB-KW"/>
</dbReference>
<dbReference type="GO" id="GO:0003677">
    <property type="term" value="F:DNA binding"/>
    <property type="evidence" value="ECO:0007669"/>
    <property type="project" value="UniProtKB-UniRule"/>
</dbReference>
<dbReference type="GO" id="GO:0003899">
    <property type="term" value="F:DNA-directed RNA polymerase activity"/>
    <property type="evidence" value="ECO:0007669"/>
    <property type="project" value="UniProtKB-UniRule"/>
</dbReference>
<dbReference type="GO" id="GO:0000287">
    <property type="term" value="F:magnesium ion binding"/>
    <property type="evidence" value="ECO:0007669"/>
    <property type="project" value="UniProtKB-UniRule"/>
</dbReference>
<dbReference type="GO" id="GO:0008270">
    <property type="term" value="F:zinc ion binding"/>
    <property type="evidence" value="ECO:0007669"/>
    <property type="project" value="UniProtKB-UniRule"/>
</dbReference>
<dbReference type="GO" id="GO:0006351">
    <property type="term" value="P:DNA-templated transcription"/>
    <property type="evidence" value="ECO:0007669"/>
    <property type="project" value="UniProtKB-UniRule"/>
</dbReference>
<dbReference type="CDD" id="cd02655">
    <property type="entry name" value="RNAP_beta'_C"/>
    <property type="match status" value="1"/>
</dbReference>
<dbReference type="CDD" id="cd01609">
    <property type="entry name" value="RNAP_beta'_N"/>
    <property type="match status" value="1"/>
</dbReference>
<dbReference type="FunFam" id="1.10.132.30:FF:000003">
    <property type="entry name" value="DNA-directed RNA polymerase subunit beta"/>
    <property type="match status" value="1"/>
</dbReference>
<dbReference type="FunFam" id="1.10.150.390:FF:000002">
    <property type="entry name" value="DNA-directed RNA polymerase subunit beta"/>
    <property type="match status" value="1"/>
</dbReference>
<dbReference type="FunFam" id="1.10.40.90:FF:000001">
    <property type="entry name" value="DNA-directed RNA polymerase subunit beta"/>
    <property type="match status" value="1"/>
</dbReference>
<dbReference type="FunFam" id="4.10.860.120:FF:000001">
    <property type="entry name" value="DNA-directed RNA polymerase subunit beta"/>
    <property type="match status" value="1"/>
</dbReference>
<dbReference type="Gene3D" id="1.10.132.30">
    <property type="match status" value="1"/>
</dbReference>
<dbReference type="Gene3D" id="1.10.150.390">
    <property type="match status" value="1"/>
</dbReference>
<dbReference type="Gene3D" id="1.10.1790.20">
    <property type="match status" value="1"/>
</dbReference>
<dbReference type="Gene3D" id="1.10.40.90">
    <property type="match status" value="1"/>
</dbReference>
<dbReference type="Gene3D" id="2.40.40.20">
    <property type="match status" value="1"/>
</dbReference>
<dbReference type="Gene3D" id="2.40.50.100">
    <property type="match status" value="3"/>
</dbReference>
<dbReference type="Gene3D" id="4.10.860.120">
    <property type="entry name" value="RNA polymerase II, clamp domain"/>
    <property type="match status" value="1"/>
</dbReference>
<dbReference type="Gene3D" id="1.10.274.100">
    <property type="entry name" value="RNA polymerase Rpb1, domain 3"/>
    <property type="match status" value="1"/>
</dbReference>
<dbReference type="HAMAP" id="MF_01322">
    <property type="entry name" value="RNApol_bact_RpoC"/>
    <property type="match status" value="1"/>
</dbReference>
<dbReference type="InterPro" id="IPR045867">
    <property type="entry name" value="DNA-dir_RpoC_beta_prime"/>
</dbReference>
<dbReference type="InterPro" id="IPR012754">
    <property type="entry name" value="DNA-dir_RpoC_beta_prime_bact"/>
</dbReference>
<dbReference type="InterPro" id="IPR000722">
    <property type="entry name" value="RNA_pol_asu"/>
</dbReference>
<dbReference type="InterPro" id="IPR006592">
    <property type="entry name" value="RNA_pol_N"/>
</dbReference>
<dbReference type="InterPro" id="IPR007080">
    <property type="entry name" value="RNA_pol_Rpb1_1"/>
</dbReference>
<dbReference type="InterPro" id="IPR007066">
    <property type="entry name" value="RNA_pol_Rpb1_3"/>
</dbReference>
<dbReference type="InterPro" id="IPR042102">
    <property type="entry name" value="RNA_pol_Rpb1_3_sf"/>
</dbReference>
<dbReference type="InterPro" id="IPR007083">
    <property type="entry name" value="RNA_pol_Rpb1_4"/>
</dbReference>
<dbReference type="InterPro" id="IPR007081">
    <property type="entry name" value="RNA_pol_Rpb1_5"/>
</dbReference>
<dbReference type="InterPro" id="IPR044893">
    <property type="entry name" value="RNA_pol_Rpb1_clamp_domain"/>
</dbReference>
<dbReference type="InterPro" id="IPR038120">
    <property type="entry name" value="Rpb1_funnel_sf"/>
</dbReference>
<dbReference type="NCBIfam" id="TIGR02386">
    <property type="entry name" value="rpoC_TIGR"/>
    <property type="match status" value="1"/>
</dbReference>
<dbReference type="PANTHER" id="PTHR19376">
    <property type="entry name" value="DNA-DIRECTED RNA POLYMERASE"/>
    <property type="match status" value="1"/>
</dbReference>
<dbReference type="PANTHER" id="PTHR19376:SF54">
    <property type="entry name" value="DNA-DIRECTED RNA POLYMERASE SUBUNIT BETA"/>
    <property type="match status" value="1"/>
</dbReference>
<dbReference type="Pfam" id="PF04997">
    <property type="entry name" value="RNA_pol_Rpb1_1"/>
    <property type="match status" value="1"/>
</dbReference>
<dbReference type="Pfam" id="PF00623">
    <property type="entry name" value="RNA_pol_Rpb1_2"/>
    <property type="match status" value="2"/>
</dbReference>
<dbReference type="Pfam" id="PF04983">
    <property type="entry name" value="RNA_pol_Rpb1_3"/>
    <property type="match status" value="1"/>
</dbReference>
<dbReference type="Pfam" id="PF05000">
    <property type="entry name" value="RNA_pol_Rpb1_4"/>
    <property type="match status" value="1"/>
</dbReference>
<dbReference type="Pfam" id="PF04998">
    <property type="entry name" value="RNA_pol_Rpb1_5"/>
    <property type="match status" value="1"/>
</dbReference>
<dbReference type="SMART" id="SM00663">
    <property type="entry name" value="RPOLA_N"/>
    <property type="match status" value="1"/>
</dbReference>
<dbReference type="SUPFAM" id="SSF64484">
    <property type="entry name" value="beta and beta-prime subunits of DNA dependent RNA-polymerase"/>
    <property type="match status" value="1"/>
</dbReference>
<reference key="1">
    <citation type="journal article" date="2002" name="Nat. Biotechnol.">
        <title>Genome sequence of the dissimilatory metal ion-reducing bacterium Shewanella oneidensis.</title>
        <authorList>
            <person name="Heidelberg J.F."/>
            <person name="Paulsen I.T."/>
            <person name="Nelson K.E."/>
            <person name="Gaidos E.J."/>
            <person name="Nelson W.C."/>
            <person name="Read T.D."/>
            <person name="Eisen J.A."/>
            <person name="Seshadri R."/>
            <person name="Ward N.L."/>
            <person name="Methe B.A."/>
            <person name="Clayton R.A."/>
            <person name="Meyer T."/>
            <person name="Tsapin A."/>
            <person name="Scott J."/>
            <person name="Beanan M.J."/>
            <person name="Brinkac L.M."/>
            <person name="Daugherty S.C."/>
            <person name="DeBoy R.T."/>
            <person name="Dodson R.J."/>
            <person name="Durkin A.S."/>
            <person name="Haft D.H."/>
            <person name="Kolonay J.F."/>
            <person name="Madupu R."/>
            <person name="Peterson J.D."/>
            <person name="Umayam L.A."/>
            <person name="White O."/>
            <person name="Wolf A.M."/>
            <person name="Vamathevan J.J."/>
            <person name="Weidman J.F."/>
            <person name="Impraim M."/>
            <person name="Lee K."/>
            <person name="Berry K.J."/>
            <person name="Lee C."/>
            <person name="Mueller J."/>
            <person name="Khouri H.M."/>
            <person name="Gill J."/>
            <person name="Utterback T.R."/>
            <person name="McDonald L.A."/>
            <person name="Feldblyum T.V."/>
            <person name="Smith H.O."/>
            <person name="Venter J.C."/>
            <person name="Nealson K.H."/>
            <person name="Fraser C.M."/>
        </authorList>
    </citation>
    <scope>NUCLEOTIDE SEQUENCE [LARGE SCALE GENOMIC DNA]</scope>
    <source>
        <strain>ATCC 700550 / JCM 31522 / CIP 106686 / LMG 19005 / NCIMB 14063 / MR-1</strain>
    </source>
</reference>
<sequence length="1405" mass="155520">MKDLLKFLKQQSKTEEFNGIKIGLASPDLIRSWSFGEVKKPETINYRTFKPEREGLFCARIFGPVKDYECLCGKYKRLKHRGVICEKCGVEVTQTKVRRERMGHIELASPVAHIWFLKSLPSRIGLMLDMTLRDIERVLYFESFVVIEPGMTSLERGQMLTEETYLDALEEYGDEFEAKMGAEAVLELLRAIDLEKEIEQMREELPSINSETRRKKVTKRLKLMEAFHTSGNKPEWMILKVLPVLPPDLRPLVPLDGGRFATSDLNDLYRRVINRNNRLKRLLDLAAPDIIVRNEKRMLQESVDALLDNGRRGRAITGSNKRPLKSLADMIKGKQGRFRQNLLGKRVDYSGRSVITVGPTLRLHQCGLPKKMALELFKPFIYGKLEGRGLATTIKAAKKMVEREVAEVWDVLDEVIREHPVMLNRAPTLHRLGIQAFEPVLIEGKAIQLHPLVCAAYNADFDGDQMAVHVPLTLEAQLEARALMMSTNNILSPANGEPVITPSQDVVLGLYYTSRERINGRGEGMYFMSVAEVEKAYATGAAELHARVKVRITETIIDENGERSEQRRIVDTTVGRALLSQILPAGLSFDLVNQNMGKKQISKLLNTCYRQLGLKDTVIFADQLMYTGFRYATISGASVGIDDMVIPAEKYTLVADAEAEVLEIQEQFQSGLVTAGERYNKVIDIWASANEKVSKAMMENLSTETVINRDGVEEKQASFNSIYMMADSGARGSAAQIRQLAGMRGLMAKPDGSIIETPIVANFREGLNVLQYFISTHGARKGLADTALKTANSGYLTRRLVDVAQDLVVIEDDCGTHEGLTMKPLIEGGDVVEPLRERVLGRVVAVDVFYPGTEDVLAPRNTLLDEAWCDKLEEHSIDEVIVRSVITCDTDFGVCAACYGRDLARGHIINHGEAIGVVAAQSIGEPGTQLTMRTFHIGGAASRASAENNVQVKNSGSLKLHNAKYVTNTDGKLVIVSRSSELAIIDELGREKERYKVPYGTVLEKLEEASVEAGDIIANWDPHTHPIITEVAGSIKFVDMIDGVTMTRQTDELTGLSSIVILDVGQRGSAGKEMRPMIRLVGADGSDLMIPGTEVPAQYFLPGSAIVNLDDNAQIAVGDALARIPQESSKTRDITGGLPRVADLFEARKPKEPAILAEISGTISFGKETKGKRRLVITPADGGEQYEEMIPKWRNLNVFEGEKVERGEVIADGPEAAHDILRLRGIHNVANYIVNEVQDVYRLQGVKINDKHIEVIIRQMLRKCVITAAGDSEFLEGEQVEVSRVKIANRELVEQGKVPATFERELLGITKASLATESFISAASFQETTRVLTEAAVGGKSDNLRGLKENVIVGRLIPAGTGYAYHKTRNDARAKKDEPVVVNKITASEAEQNLADLLNLAGSQD</sequence>
<gene>
    <name evidence="1" type="primary">rpoC</name>
    <name type="ordered locus">SO_0225</name>
</gene>